<organism>
    <name type="scientific">Homo sapiens</name>
    <name type="common">Human</name>
    <dbReference type="NCBI Taxonomy" id="9606"/>
    <lineage>
        <taxon>Eukaryota</taxon>
        <taxon>Metazoa</taxon>
        <taxon>Chordata</taxon>
        <taxon>Craniata</taxon>
        <taxon>Vertebrata</taxon>
        <taxon>Euteleostomi</taxon>
        <taxon>Mammalia</taxon>
        <taxon>Eutheria</taxon>
        <taxon>Euarchontoglires</taxon>
        <taxon>Primates</taxon>
        <taxon>Haplorrhini</taxon>
        <taxon>Catarrhini</taxon>
        <taxon>Hominidae</taxon>
        <taxon>Homo</taxon>
    </lineage>
</organism>
<sequence length="456" mass="52071">MFLLLPFDSLIVNLLGISLTVLFTLLLVFIIVPAIFGVSFGIRKLYMKSLLKIFAWATLRMERGAKEKNHQLYKPYTNGIIAKDPTSLEEEIKEIRRSGSSKALDNTPEFELSDIFYFCRKGMETIMDDEVTKRFSAEELESWNLLSRTNYNFQYISLRLTVLWGLGVLIRYCFLLPLRIALAFTGISLLVVGTTVVGYLPNGRFKEFMSKHVHLMCYRICVRALTAIITYHDRENRPRNGGICVANHTSPIDVIILASDGYYAMVGQVHGGLMGVIQRAMVKACPHVWFERSEVKDRHLVAKRLTEHVQDKSKLPILIFPEGTCINNTSVMMFKKGSFEIGATVYPVAIKYDPQFGDAFWNSSKYGMVTYLLRMMTSWAIVCSVWYLPPMTREADEDAVQFANRVKSAIARQGGLVDLLWDGGLKREKVKDTFKEEQQKLYSKMIVGNHKDRSRS</sequence>
<name>GPAT4_HUMAN</name>
<evidence type="ECO:0000250" key="1">
    <source>
        <dbReference type="UniProtKB" id="Q9D517"/>
    </source>
</evidence>
<evidence type="ECO:0000255" key="2"/>
<evidence type="ECO:0000269" key="3">
    <source>
    </source>
</evidence>
<evidence type="ECO:0000269" key="4">
    <source>
    </source>
</evidence>
<evidence type="ECO:0000269" key="5">
    <source>
    </source>
</evidence>
<evidence type="ECO:0000269" key="6">
    <source>
    </source>
</evidence>
<evidence type="ECO:0000303" key="7">
    <source>
    </source>
</evidence>
<evidence type="ECO:0000303" key="8">
    <source>
    </source>
</evidence>
<evidence type="ECO:0000305" key="9"/>
<evidence type="ECO:0000305" key="10">
    <source>
    </source>
</evidence>
<evidence type="ECO:0000312" key="11">
    <source>
        <dbReference type="HGNC" id="HGNC:20880"/>
    </source>
</evidence>
<reference key="1">
    <citation type="journal article" date="2003" name="J. Hum. Genet.">
        <title>Cloning and identification of the human LPAAT-zeta gene, a novel member of the lysophosphatidic acid acyltransferase family.</title>
        <authorList>
            <person name="Li D."/>
            <person name="Yu L."/>
            <person name="Wu H."/>
            <person name="Shan Y."/>
            <person name="Guo J."/>
            <person name="Dang Y."/>
            <person name="Wei Y."/>
            <person name="Zhao S."/>
        </authorList>
    </citation>
    <scope>NUCLEOTIDE SEQUENCE [MRNA]</scope>
    <scope>TISSUE SPECIFICITY</scope>
</reference>
<reference key="2">
    <citation type="journal article" date="2006" name="Yi Chuan Xue Bao">
        <title>Molecular cloning and preliminary function study of a novel human gene, TSARG7, related to spermatogenesis.</title>
        <authorList>
            <person name="Tan X.J."/>
            <person name="Huang Z.P."/>
            <person name="Li L.Y."/>
            <person name="Nie D.S."/>
            <person name="Zhong C.G."/>
            <person name="Fu J.J."/>
            <person name="Lu G.X."/>
        </authorList>
    </citation>
    <scope>NUCLEOTIDE SEQUENCE [MRNA]</scope>
    <scope>TISSUE SPECIFICITY</scope>
</reference>
<reference key="3">
    <citation type="journal article" date="2008" name="J. Biol. Chem.">
        <title>AGPAT6 is a novel microsomal glycerol-3-phosphate acyltransferase.</title>
        <authorList>
            <person name="Chen Y.Q."/>
            <person name="Kuo M.-S."/>
            <person name="Li S."/>
            <person name="Bui H.H."/>
            <person name="Peake D.A."/>
            <person name="Sanders P.E."/>
            <person name="Thibodeaux S.J."/>
            <person name="Chu S."/>
            <person name="Qian Y.-W."/>
            <person name="Zhao Y."/>
            <person name="Bredt D.S."/>
            <person name="Moller D.E."/>
            <person name="Konrad R.J."/>
            <person name="Beigneux A.P."/>
            <person name="Young S.G."/>
            <person name="Cao G."/>
        </authorList>
    </citation>
    <scope>NUCLEOTIDE SEQUENCE [MRNA]</scope>
    <scope>PROTEIN SEQUENCE</scope>
    <scope>FUNCTION</scope>
    <scope>CATALYTIC ACTIVITY</scope>
    <scope>SUBCELLULAR LOCATION</scope>
    <scope>ACTIVITY REGULATION</scope>
    <scope>TISSUE SPECIFICITY</scope>
</reference>
<reference key="4">
    <citation type="submission" date="2005-09" db="EMBL/GenBank/DDBJ databases">
        <authorList>
            <person name="Mural R.J."/>
            <person name="Istrail S."/>
            <person name="Sutton G.G."/>
            <person name="Florea L."/>
            <person name="Halpern A.L."/>
            <person name="Mobarry C.M."/>
            <person name="Lippert R."/>
            <person name="Walenz B."/>
            <person name="Shatkay H."/>
            <person name="Dew I."/>
            <person name="Miller J.R."/>
            <person name="Flanigan M.J."/>
            <person name="Edwards N.J."/>
            <person name="Bolanos R."/>
            <person name="Fasulo D."/>
            <person name="Halldorsson B.V."/>
            <person name="Hannenhalli S."/>
            <person name="Turner R."/>
            <person name="Yooseph S."/>
            <person name="Lu F."/>
            <person name="Nusskern D.R."/>
            <person name="Shue B.C."/>
            <person name="Zheng X.H."/>
            <person name="Zhong F."/>
            <person name="Delcher A.L."/>
            <person name="Huson D.H."/>
            <person name="Kravitz S.A."/>
            <person name="Mouchard L."/>
            <person name="Reinert K."/>
            <person name="Remington K.A."/>
            <person name="Clark A.G."/>
            <person name="Waterman M.S."/>
            <person name="Eichler E.E."/>
            <person name="Adams M.D."/>
            <person name="Hunkapiller M.W."/>
            <person name="Myers E.W."/>
            <person name="Venter J.C."/>
        </authorList>
    </citation>
    <scope>NUCLEOTIDE SEQUENCE [LARGE SCALE GENOMIC DNA]</scope>
</reference>
<reference key="5">
    <citation type="journal article" date="2003" name="Genome Res.">
        <title>The secreted protein discovery initiative (SPDI), a large-scale effort to identify novel human secreted and transmembrane proteins: a bioinformatics assessment.</title>
        <authorList>
            <person name="Clark H.F."/>
            <person name="Gurney A.L."/>
            <person name="Abaya E."/>
            <person name="Baker K."/>
            <person name="Baldwin D.T."/>
            <person name="Brush J."/>
            <person name="Chen J."/>
            <person name="Chow B."/>
            <person name="Chui C."/>
            <person name="Crowley C."/>
            <person name="Currell B."/>
            <person name="Deuel B."/>
            <person name="Dowd P."/>
            <person name="Eaton D."/>
            <person name="Foster J.S."/>
            <person name="Grimaldi C."/>
            <person name="Gu Q."/>
            <person name="Hass P.E."/>
            <person name="Heldens S."/>
            <person name="Huang A."/>
            <person name="Kim H.S."/>
            <person name="Klimowski L."/>
            <person name="Jin Y."/>
            <person name="Johnson S."/>
            <person name="Lee J."/>
            <person name="Lewis L."/>
            <person name="Liao D."/>
            <person name="Mark M.R."/>
            <person name="Robbie E."/>
            <person name="Sanchez C."/>
            <person name="Schoenfeld J."/>
            <person name="Seshagiri S."/>
            <person name="Simmons L."/>
            <person name="Singh J."/>
            <person name="Smith V."/>
            <person name="Stinson J."/>
            <person name="Vagts A."/>
            <person name="Vandlen R.L."/>
            <person name="Watanabe C."/>
            <person name="Wieand D."/>
            <person name="Woods K."/>
            <person name="Xie M.-H."/>
            <person name="Yansura D.G."/>
            <person name="Yi S."/>
            <person name="Yu G."/>
            <person name="Yuan J."/>
            <person name="Zhang M."/>
            <person name="Zhang Z."/>
            <person name="Goddard A.D."/>
            <person name="Wood W.I."/>
            <person name="Godowski P.J."/>
            <person name="Gray A.M."/>
        </authorList>
    </citation>
    <scope>NUCLEOTIDE SEQUENCE [LARGE SCALE MRNA]</scope>
</reference>
<reference key="6">
    <citation type="journal article" date="2004" name="Genome Res.">
        <title>The status, quality, and expansion of the NIH full-length cDNA project: the Mammalian Gene Collection (MGC).</title>
        <authorList>
            <consortium name="The MGC Project Team"/>
        </authorList>
    </citation>
    <scope>NUCLEOTIDE SEQUENCE [LARGE SCALE MRNA]</scope>
    <source>
        <tissue>Ovary</tissue>
    </source>
</reference>
<reference key="7">
    <citation type="journal article" date="2019" name="Mol. Cell">
        <title>Probing the global cellular responses to lipotoxicity caused by saturated fatty acids.</title>
        <authorList>
            <person name="Piccolis M."/>
            <person name="Bond L.M."/>
            <person name="Kampmann M."/>
            <person name="Pulimeno P."/>
            <person name="Chitraju C."/>
            <person name="Jayson C.B.K."/>
            <person name="Vaites L.P."/>
            <person name="Boland S."/>
            <person name="Lai Z.W."/>
            <person name="Gabriel K.R."/>
            <person name="Elliott S.D."/>
            <person name="Paulo J.A."/>
            <person name="Harper J.W."/>
            <person name="Weissman J.S."/>
            <person name="Walther T.C."/>
            <person name="Farese R.V. Jr."/>
        </authorList>
    </citation>
    <scope>FUNCTION</scope>
</reference>
<feature type="signal peptide" evidence="2">
    <location>
        <begin position="1"/>
        <end position="37"/>
    </location>
</feature>
<feature type="chain" id="PRO_0000024703" description="Glycerol-3-phosphate acyltransferase 4">
    <location>
        <begin position="38"/>
        <end position="456"/>
    </location>
</feature>
<feature type="transmembrane region" description="Helical" evidence="2">
    <location>
        <begin position="156"/>
        <end position="176"/>
    </location>
</feature>
<feature type="transmembrane region" description="Helical" evidence="2">
    <location>
        <begin position="180"/>
        <end position="200"/>
    </location>
</feature>
<feature type="short sequence motif" description="HXXXXD motif" evidence="1">
    <location>
        <begin position="248"/>
        <end position="253"/>
    </location>
</feature>
<feature type="glycosylation site" description="N-linked (GlcNAc...) asparagine" evidence="2">
    <location>
        <position position="247"/>
    </location>
</feature>
<feature type="glycosylation site" description="N-linked (GlcNAc...) asparagine" evidence="2">
    <location>
        <position position="327"/>
    </location>
</feature>
<feature type="glycosylation site" description="N-linked (GlcNAc...) asparagine" evidence="2">
    <location>
        <position position="328"/>
    </location>
</feature>
<feature type="glycosylation site" description="N-linked (GlcNAc...) asparagine" evidence="2">
    <location>
        <position position="362"/>
    </location>
</feature>
<keyword id="KW-0012">Acyltransferase</keyword>
<keyword id="KW-0903">Direct protein sequencing</keyword>
<keyword id="KW-0256">Endoplasmic reticulum</keyword>
<keyword id="KW-0325">Glycoprotein</keyword>
<keyword id="KW-0444">Lipid biosynthesis</keyword>
<keyword id="KW-0443">Lipid metabolism</keyword>
<keyword id="KW-0472">Membrane</keyword>
<keyword id="KW-0594">Phospholipid biosynthesis</keyword>
<keyword id="KW-1208">Phospholipid metabolism</keyword>
<keyword id="KW-1267">Proteomics identification</keyword>
<keyword id="KW-1185">Reference proteome</keyword>
<keyword id="KW-0732">Signal</keyword>
<keyword id="KW-0808">Transferase</keyword>
<keyword id="KW-0812">Transmembrane</keyword>
<keyword id="KW-1133">Transmembrane helix</keyword>
<proteinExistence type="evidence at protein level"/>
<protein>
    <recommendedName>
        <fullName evidence="11">Glycerol-3-phosphate acyltransferase 4</fullName>
        <ecNumber evidence="5">2.3.1.15</ecNumber>
    </recommendedName>
    <alternativeName>
        <fullName>1-acylglycerol-3-phosphate O-acyltransferase 6</fullName>
        <shortName>1-AGP acyltransferase 6</shortName>
        <shortName>1-AGPAT 6</shortName>
    </alternativeName>
    <alternativeName>
        <fullName>Acyl-CoA:glycerol-3-phosphate acyltransferase 4</fullName>
    </alternativeName>
    <alternativeName>
        <fullName>Lysophosphatidic acid acyltransferase zeta</fullName>
        <shortName>LPAAT-zeta</shortName>
    </alternativeName>
    <alternativeName>
        <fullName evidence="7">Testis spermatogenesis apoptosis-related protein 7</fullName>
        <shortName evidence="7">TSARG7</shortName>
    </alternativeName>
</protein>
<dbReference type="EC" id="2.3.1.15" evidence="5"/>
<dbReference type="EMBL" id="AF406612">
    <property type="protein sequence ID" value="AAP21893.1"/>
    <property type="molecule type" value="mRNA"/>
</dbReference>
<dbReference type="EMBL" id="AY513610">
    <property type="protein sequence ID" value="AAS82774.1"/>
    <property type="molecule type" value="mRNA"/>
</dbReference>
<dbReference type="EMBL" id="AY358670">
    <property type="protein sequence ID" value="AAQ89033.1"/>
    <property type="molecule type" value="mRNA"/>
</dbReference>
<dbReference type="EMBL" id="CH471080">
    <property type="protein sequence ID" value="EAW63254.1"/>
    <property type="molecule type" value="Genomic_DNA"/>
</dbReference>
<dbReference type="EMBL" id="CH471080">
    <property type="protein sequence ID" value="EAW63255.1"/>
    <property type="molecule type" value="Genomic_DNA"/>
</dbReference>
<dbReference type="EMBL" id="BC051377">
    <property type="protein sequence ID" value="AAH51377.2"/>
    <property type="molecule type" value="mRNA"/>
</dbReference>
<dbReference type="EMBL" id="BC061884">
    <property type="protein sequence ID" value="AAH61884.1"/>
    <property type="molecule type" value="mRNA"/>
</dbReference>
<dbReference type="CCDS" id="CCDS6117.1"/>
<dbReference type="RefSeq" id="NP_001350126.1">
    <property type="nucleotide sequence ID" value="NM_001363197.2"/>
</dbReference>
<dbReference type="RefSeq" id="NP_848934.1">
    <property type="nucleotide sequence ID" value="NM_178819.4"/>
</dbReference>
<dbReference type="RefSeq" id="XP_011542694.1">
    <property type="nucleotide sequence ID" value="XM_011544392.2"/>
</dbReference>
<dbReference type="RefSeq" id="XP_011542695.1">
    <property type="nucleotide sequence ID" value="XM_011544393.1"/>
</dbReference>
<dbReference type="RefSeq" id="XP_011542696.1">
    <property type="nucleotide sequence ID" value="XM_011544394.1"/>
</dbReference>
<dbReference type="RefSeq" id="XP_016868531.1">
    <property type="nucleotide sequence ID" value="XM_017013042.1"/>
</dbReference>
<dbReference type="RefSeq" id="XP_047277326.1">
    <property type="nucleotide sequence ID" value="XM_047421370.1"/>
</dbReference>
<dbReference type="RefSeq" id="XP_047277327.1">
    <property type="nucleotide sequence ID" value="XM_047421371.1"/>
</dbReference>
<dbReference type="RefSeq" id="XP_047277328.1">
    <property type="nucleotide sequence ID" value="XM_047421372.1"/>
</dbReference>
<dbReference type="RefSeq" id="XP_054215737.1">
    <property type="nucleotide sequence ID" value="XM_054359762.1"/>
</dbReference>
<dbReference type="RefSeq" id="XP_054215738.1">
    <property type="nucleotide sequence ID" value="XM_054359763.1"/>
</dbReference>
<dbReference type="RefSeq" id="XP_054215739.1">
    <property type="nucleotide sequence ID" value="XM_054359764.1"/>
</dbReference>
<dbReference type="BioGRID" id="126493">
    <property type="interactions" value="175"/>
</dbReference>
<dbReference type="FunCoup" id="Q86UL3">
    <property type="interactions" value="2411"/>
</dbReference>
<dbReference type="IntAct" id="Q86UL3">
    <property type="interactions" value="71"/>
</dbReference>
<dbReference type="MINT" id="Q86UL3"/>
<dbReference type="STRING" id="9606.ENSP00000380184"/>
<dbReference type="ChEMBL" id="CHEMBL4523372"/>
<dbReference type="SwissLipids" id="SLP:000000280"/>
<dbReference type="GlyCosmos" id="Q86UL3">
    <property type="glycosylation" value="5 sites, 1 glycan"/>
</dbReference>
<dbReference type="GlyGen" id="Q86UL3">
    <property type="glycosylation" value="5 sites, 1 O-linked glycan (1 site)"/>
</dbReference>
<dbReference type="iPTMnet" id="Q86UL3"/>
<dbReference type="PhosphoSitePlus" id="Q86UL3"/>
<dbReference type="SwissPalm" id="Q86UL3"/>
<dbReference type="BioMuta" id="GPAT4"/>
<dbReference type="DMDM" id="68052729"/>
<dbReference type="jPOST" id="Q86UL3"/>
<dbReference type="MassIVE" id="Q86UL3"/>
<dbReference type="PaxDb" id="9606-ENSP00000380184"/>
<dbReference type="PeptideAtlas" id="Q86UL3"/>
<dbReference type="ProteomicsDB" id="69830"/>
<dbReference type="Pumba" id="Q86UL3"/>
<dbReference type="TopDownProteomics" id="Q86UL3"/>
<dbReference type="Antibodypedia" id="3092">
    <property type="antibodies" value="279 antibodies from 23 providers"/>
</dbReference>
<dbReference type="DNASU" id="137964"/>
<dbReference type="Ensembl" id="ENST00000396987.7">
    <property type="protein sequence ID" value="ENSP00000380184.3"/>
    <property type="gene ID" value="ENSG00000158669.11"/>
</dbReference>
<dbReference type="GeneID" id="137964"/>
<dbReference type="KEGG" id="hsa:137964"/>
<dbReference type="MANE-Select" id="ENST00000396987.7">
    <property type="protein sequence ID" value="ENSP00000380184.3"/>
    <property type="RefSeq nucleotide sequence ID" value="NM_178819.4"/>
    <property type="RefSeq protein sequence ID" value="NP_848934.1"/>
</dbReference>
<dbReference type="UCSC" id="uc003xnz.3">
    <property type="organism name" value="human"/>
</dbReference>
<dbReference type="AGR" id="HGNC:20880"/>
<dbReference type="CTD" id="137964"/>
<dbReference type="DisGeNET" id="137964"/>
<dbReference type="GeneCards" id="GPAT4"/>
<dbReference type="HGNC" id="HGNC:20880">
    <property type="gene designation" value="GPAT4"/>
</dbReference>
<dbReference type="HPA" id="ENSG00000158669">
    <property type="expression patterns" value="Low tissue specificity"/>
</dbReference>
<dbReference type="MIM" id="608143">
    <property type="type" value="gene"/>
</dbReference>
<dbReference type="neXtProt" id="NX_Q86UL3"/>
<dbReference type="OpenTargets" id="ENSG00000158669"/>
<dbReference type="PharmGKB" id="PA142672637"/>
<dbReference type="VEuPathDB" id="HostDB:ENSG00000158669"/>
<dbReference type="eggNOG" id="KOG2898">
    <property type="taxonomic scope" value="Eukaryota"/>
</dbReference>
<dbReference type="GeneTree" id="ENSGT01030000234574"/>
<dbReference type="HOGENOM" id="CLU_031080_0_1_1"/>
<dbReference type="InParanoid" id="Q86UL3"/>
<dbReference type="OMA" id="ANHTTVM"/>
<dbReference type="OrthoDB" id="10051137at2759"/>
<dbReference type="PAN-GO" id="Q86UL3">
    <property type="GO annotations" value="0 GO annotations based on evolutionary models"/>
</dbReference>
<dbReference type="PhylomeDB" id="Q86UL3"/>
<dbReference type="TreeFam" id="TF315039"/>
<dbReference type="BRENDA" id="2.3.1.15">
    <property type="organism ID" value="2681"/>
</dbReference>
<dbReference type="PathwayCommons" id="Q86UL3"/>
<dbReference type="Reactome" id="R-HSA-1483166">
    <property type="pathway name" value="Synthesis of PA"/>
</dbReference>
<dbReference type="SignaLink" id="Q86UL3"/>
<dbReference type="UniPathway" id="UPA00557">
    <property type="reaction ID" value="UER00612"/>
</dbReference>
<dbReference type="BioGRID-ORCS" id="137964">
    <property type="hits" value="35 hits in 1159 CRISPR screens"/>
</dbReference>
<dbReference type="ChiTaRS" id="GPAT4">
    <property type="organism name" value="human"/>
</dbReference>
<dbReference type="GenomeRNAi" id="137964"/>
<dbReference type="Pharos" id="Q86UL3">
    <property type="development level" value="Tbio"/>
</dbReference>
<dbReference type="PRO" id="PR:Q86UL3"/>
<dbReference type="Proteomes" id="UP000005640">
    <property type="component" value="Chromosome 8"/>
</dbReference>
<dbReference type="RNAct" id="Q86UL3">
    <property type="molecule type" value="protein"/>
</dbReference>
<dbReference type="Bgee" id="ENSG00000158669">
    <property type="expression patterns" value="Expressed in islet of Langerhans and 177 other cell types or tissues"/>
</dbReference>
<dbReference type="ExpressionAtlas" id="Q86UL3">
    <property type="expression patterns" value="baseline and differential"/>
</dbReference>
<dbReference type="GO" id="GO:0005783">
    <property type="term" value="C:endoplasmic reticulum"/>
    <property type="evidence" value="ECO:0000314"/>
    <property type="project" value="UniProtKB"/>
</dbReference>
<dbReference type="GO" id="GO:0005789">
    <property type="term" value="C:endoplasmic reticulum membrane"/>
    <property type="evidence" value="ECO:0000304"/>
    <property type="project" value="Reactome"/>
</dbReference>
<dbReference type="GO" id="GO:0016020">
    <property type="term" value="C:membrane"/>
    <property type="evidence" value="ECO:0000314"/>
    <property type="project" value="UniProtKB"/>
</dbReference>
<dbReference type="GO" id="GO:0003841">
    <property type="term" value="F:1-acylglycerol-3-phosphate O-acyltransferase activity"/>
    <property type="evidence" value="ECO:0000304"/>
    <property type="project" value="Reactome"/>
</dbReference>
<dbReference type="GO" id="GO:0004366">
    <property type="term" value="F:glycerol-3-phosphate O-acyltransferase activity"/>
    <property type="evidence" value="ECO:0000314"/>
    <property type="project" value="UniProtKB"/>
</dbReference>
<dbReference type="GO" id="GO:0006637">
    <property type="term" value="P:acyl-CoA metabolic process"/>
    <property type="evidence" value="ECO:0000314"/>
    <property type="project" value="UniProtKB"/>
</dbReference>
<dbReference type="GO" id="GO:0016024">
    <property type="term" value="P:CDP-diacylglycerol biosynthetic process"/>
    <property type="evidence" value="ECO:0007669"/>
    <property type="project" value="UniProtKB-UniPathway"/>
</dbReference>
<dbReference type="GO" id="GO:0046339">
    <property type="term" value="P:diacylglycerol metabolic process"/>
    <property type="evidence" value="ECO:0007669"/>
    <property type="project" value="Ensembl"/>
</dbReference>
<dbReference type="GO" id="GO:0006631">
    <property type="term" value="P:fatty acid metabolic process"/>
    <property type="evidence" value="ECO:0007669"/>
    <property type="project" value="Ensembl"/>
</dbReference>
<dbReference type="GO" id="GO:0002071">
    <property type="term" value="P:glandular epithelial cell maturation"/>
    <property type="evidence" value="ECO:0007669"/>
    <property type="project" value="Ensembl"/>
</dbReference>
<dbReference type="GO" id="GO:0007595">
    <property type="term" value="P:lactation"/>
    <property type="evidence" value="ECO:0000250"/>
    <property type="project" value="UniProtKB"/>
</dbReference>
<dbReference type="GO" id="GO:0008610">
    <property type="term" value="P:lipid biosynthetic process"/>
    <property type="evidence" value="ECO:0000250"/>
    <property type="project" value="UniProtKB"/>
</dbReference>
<dbReference type="GO" id="GO:0006654">
    <property type="term" value="P:phosphatidic acid biosynthetic process"/>
    <property type="evidence" value="ECO:0000304"/>
    <property type="project" value="Reactome"/>
</dbReference>
<dbReference type="GO" id="GO:0006656">
    <property type="term" value="P:phosphatidylcholine biosynthetic process"/>
    <property type="evidence" value="ECO:0000314"/>
    <property type="project" value="UniProtKB"/>
</dbReference>
<dbReference type="GO" id="GO:0040014">
    <property type="term" value="P:regulation of multicellular organism growth"/>
    <property type="evidence" value="ECO:0007669"/>
    <property type="project" value="Ensembl"/>
</dbReference>
<dbReference type="GO" id="GO:0019432">
    <property type="term" value="P:triglyceride biosynthetic process"/>
    <property type="evidence" value="ECO:0000250"/>
    <property type="project" value="UniProtKB"/>
</dbReference>
<dbReference type="CDD" id="cd07991">
    <property type="entry name" value="LPLAT_LPCAT1-like"/>
    <property type="match status" value="1"/>
</dbReference>
<dbReference type="InterPro" id="IPR045252">
    <property type="entry name" value="LPCAT1-like"/>
</dbReference>
<dbReference type="InterPro" id="IPR002123">
    <property type="entry name" value="Plipid/glycerol_acylTrfase"/>
</dbReference>
<dbReference type="PANTHER" id="PTHR23063:SF37">
    <property type="entry name" value="GLYCEROL-3-PHOSPHATE ACYLTRANSFERASE 4"/>
    <property type="match status" value="1"/>
</dbReference>
<dbReference type="PANTHER" id="PTHR23063">
    <property type="entry name" value="PHOSPHOLIPID ACYLTRANSFERASE"/>
    <property type="match status" value="1"/>
</dbReference>
<dbReference type="Pfam" id="PF01553">
    <property type="entry name" value="Acyltransferase"/>
    <property type="match status" value="1"/>
</dbReference>
<dbReference type="SMART" id="SM00563">
    <property type="entry name" value="PlsC"/>
    <property type="match status" value="1"/>
</dbReference>
<dbReference type="SUPFAM" id="SSF69593">
    <property type="entry name" value="Glycerol-3-phosphate (1)-acyltransferase"/>
    <property type="match status" value="1"/>
</dbReference>
<comment type="function">
    <text evidence="5 6">Converts glycerol-3-phosphate to 1-acyl-sn-glycerol-3-phosphate (lysophosphatidic acid or LPA) by incorporating an acyl moiety at the sn-1 position of the glycerol backbone (PubMed:18238778). Active against both saturated and unsaturated long-chain fatty acyl-CoAs (PubMed:18238778). Protects cells against lipotoxicity (PubMed:30846318).</text>
</comment>
<comment type="catalytic activity">
    <reaction evidence="5">
        <text>sn-glycerol 3-phosphate + an acyl-CoA = a 1-acyl-sn-glycero-3-phosphate + CoA</text>
        <dbReference type="Rhea" id="RHEA:15325"/>
        <dbReference type="ChEBI" id="CHEBI:57287"/>
        <dbReference type="ChEBI" id="CHEBI:57597"/>
        <dbReference type="ChEBI" id="CHEBI:57970"/>
        <dbReference type="ChEBI" id="CHEBI:58342"/>
        <dbReference type="EC" id="2.3.1.15"/>
    </reaction>
    <physiologicalReaction direction="left-to-right" evidence="10">
        <dbReference type="Rhea" id="RHEA:15326"/>
    </physiologicalReaction>
</comment>
<comment type="catalytic activity">
    <reaction evidence="5">
        <text>dodecanoyl-CoA + sn-glycerol 3-phosphate = 1-dodecanoyl-sn-glycerol 3-phosphate + CoA</text>
        <dbReference type="Rhea" id="RHEA:35727"/>
        <dbReference type="ChEBI" id="CHEBI:57287"/>
        <dbReference type="ChEBI" id="CHEBI:57375"/>
        <dbReference type="ChEBI" id="CHEBI:57597"/>
        <dbReference type="ChEBI" id="CHEBI:72682"/>
    </reaction>
    <physiologicalReaction direction="left-to-right" evidence="10">
        <dbReference type="Rhea" id="RHEA:35728"/>
    </physiologicalReaction>
</comment>
<comment type="catalytic activity">
    <reaction evidence="5">
        <text>sn-glycerol 3-phosphate + hexadecanoyl-CoA = 1-hexadecanoyl-sn-glycero-3-phosphate + CoA</text>
        <dbReference type="Rhea" id="RHEA:35723"/>
        <dbReference type="ChEBI" id="CHEBI:57287"/>
        <dbReference type="ChEBI" id="CHEBI:57379"/>
        <dbReference type="ChEBI" id="CHEBI:57518"/>
        <dbReference type="ChEBI" id="CHEBI:57597"/>
    </reaction>
    <physiologicalReaction direction="left-to-right" evidence="10">
        <dbReference type="Rhea" id="RHEA:35724"/>
    </physiologicalReaction>
</comment>
<comment type="catalytic activity">
    <reaction evidence="5">
        <text>sn-glycerol 3-phosphate + octadecanoyl-CoA = 1-octadecanoyl-sn-glycero-3-phosphate + CoA</text>
        <dbReference type="Rhea" id="RHEA:37195"/>
        <dbReference type="ChEBI" id="CHEBI:57287"/>
        <dbReference type="ChEBI" id="CHEBI:57394"/>
        <dbReference type="ChEBI" id="CHEBI:57597"/>
        <dbReference type="ChEBI" id="CHEBI:74565"/>
    </reaction>
    <physiologicalReaction direction="left-to-right" evidence="10">
        <dbReference type="Rhea" id="RHEA:37196"/>
    </physiologicalReaction>
</comment>
<comment type="catalytic activity">
    <reaction evidence="5">
        <text>sn-glycerol 3-phosphate + (9Z)-octadecenoyl-CoA = 1-(9Z-octadecenoyl)-sn-glycero-3-phosphate + CoA</text>
        <dbReference type="Rhea" id="RHEA:37199"/>
        <dbReference type="ChEBI" id="CHEBI:57287"/>
        <dbReference type="ChEBI" id="CHEBI:57387"/>
        <dbReference type="ChEBI" id="CHEBI:57597"/>
        <dbReference type="ChEBI" id="CHEBI:74544"/>
    </reaction>
    <physiologicalReaction direction="left-to-right" evidence="10">
        <dbReference type="Rhea" id="RHEA:37200"/>
    </physiologicalReaction>
</comment>
<comment type="catalytic activity">
    <reaction evidence="5">
        <text>(9Z,12Z)-octadecadienoyl-CoA + sn-glycerol 3-phosphate = 1-(9Z,12Z)-octadecadienoyl-sn-glycero-3-phosphate + CoA</text>
        <dbReference type="Rhea" id="RHEA:37203"/>
        <dbReference type="ChEBI" id="CHEBI:57287"/>
        <dbReference type="ChEBI" id="CHEBI:57383"/>
        <dbReference type="ChEBI" id="CHEBI:57597"/>
        <dbReference type="ChEBI" id="CHEBI:74547"/>
    </reaction>
    <physiologicalReaction direction="left-to-right" evidence="10">
        <dbReference type="Rhea" id="RHEA:37204"/>
    </physiologicalReaction>
</comment>
<comment type="activity regulation">
    <text evidence="5">Inhibited by N-ethylmaleimide (NEM).</text>
</comment>
<comment type="pathway">
    <text>Phospholipid metabolism; CDP-diacylglycerol biosynthesis; CDP-diacylglycerol from sn-glycerol 3-phosphate: step 1/3.</text>
</comment>
<comment type="subcellular location">
    <subcellularLocation>
        <location evidence="5">Endoplasmic reticulum membrane</location>
        <topology evidence="2">Multi-pass membrane protein</topology>
    </subcellularLocation>
</comment>
<comment type="tissue specificity">
    <text evidence="3 4 5">Ubiquitous. High levels in testis. Relatively high level of expression in skeletal muscle and heart. Relatively low level of expression in lung.</text>
</comment>
<comment type="domain">
    <text evidence="1">The HXXXXD motif is essential for acyltransferase activity and may constitute the binding site for the phosphate moiety of the glycerol-3-phosphate.</text>
</comment>
<comment type="similarity">
    <text evidence="9">Belongs to the 1-acyl-sn-glycerol-3-phosphate acyltransferase family.</text>
</comment>
<gene>
    <name evidence="11" type="primary">GPAT4</name>
    <name evidence="8" type="synonym">AGPAT6</name>
    <name evidence="7" type="synonym">TSARG7</name>
    <name type="ORF">UNQ551/PRO1108</name>
</gene>
<accession>Q86UL3</accession>
<accession>Q2TU73</accession>
<accession>Q86V89</accession>